<evidence type="ECO:0000250" key="1">
    <source>
        <dbReference type="UniProtKB" id="D9IX97"/>
    </source>
</evidence>
<evidence type="ECO:0000250" key="2">
    <source>
        <dbReference type="UniProtKB" id="P28374"/>
    </source>
</evidence>
<evidence type="ECO:0000255" key="3"/>
<evidence type="ECO:0000305" key="4"/>
<evidence type="ECO:0000305" key="5">
    <source>
    </source>
</evidence>
<reference key="1">
    <citation type="journal article" date="2011" name="J. Proteomics">
        <title>Snake venomics and venom gland transcriptomic analysis of Brazilian coral snakes, Micrurus altirostris and M. corallinus.</title>
        <authorList>
            <person name="Correa-Netto C."/>
            <person name="Junqueira-de-Azevedo Ide L."/>
            <person name="Silva D.A."/>
            <person name="Ho P.L."/>
            <person name="Leitao-de-Araujo M."/>
            <person name="Alves M.L."/>
            <person name="Sanz L."/>
            <person name="Foguel D."/>
            <person name="Zingali R.B."/>
            <person name="Calvete J.J."/>
        </authorList>
    </citation>
    <scope>NUCLEOTIDE SEQUENCE [MRNA]</scope>
    <source>
        <tissue>Venom gland</tissue>
    </source>
</reference>
<sequence length="120" mass="12915">MVGLSRLADGGLLLVLALLPLALDGKPAPLEKAPMAPARIIPYLRPVGKESRAALDRMVPPEDGDSRRLEGLAKEALGEGCFGNRIDRIGDVSGMGCNRRTPAPKAPLRILPYLRPIRKE</sequence>
<name>VNP_MICAT</name>
<comment type="function">
    <text evidence="1">Natriuretic peptide that dose-dependently induces the rapid relaxation of rat aortic strips phenylephrine-precontracted. Acts by stimulating cGMP production in a dose-dependent manner (by probably activating NPR1 and/or NPR2). May also show potent hypotensive effects.</text>
</comment>
<comment type="subcellular location">
    <subcellularLocation>
        <location evidence="5">Secreted</location>
    </subcellularLocation>
</comment>
<comment type="tissue specificity">
    <text evidence="5">Expressed by the venom gland.</text>
</comment>
<comment type="similarity">
    <text evidence="4">Belongs to the natriuretic peptide family.</text>
</comment>
<accession>F5CPE8</accession>
<organism>
    <name type="scientific">Micrurus altirostris</name>
    <name type="common">Uruguayan coral snake</name>
    <name type="synonym">Elaps altirostris</name>
    <dbReference type="NCBI Taxonomy" id="129457"/>
    <lineage>
        <taxon>Eukaryota</taxon>
        <taxon>Metazoa</taxon>
        <taxon>Chordata</taxon>
        <taxon>Craniata</taxon>
        <taxon>Vertebrata</taxon>
        <taxon>Euteleostomi</taxon>
        <taxon>Lepidosauria</taxon>
        <taxon>Squamata</taxon>
        <taxon>Bifurcata</taxon>
        <taxon>Unidentata</taxon>
        <taxon>Episquamata</taxon>
        <taxon>Toxicofera</taxon>
        <taxon>Serpentes</taxon>
        <taxon>Colubroidea</taxon>
        <taxon>Elapidae</taxon>
        <taxon>Elapinae</taxon>
        <taxon>Micrurus</taxon>
    </lineage>
</organism>
<protein>
    <recommendedName>
        <fullName>Natriuretic peptide</fullName>
        <shortName>NP</shortName>
    </recommendedName>
</protein>
<dbReference type="EMBL" id="JF754486">
    <property type="protein sequence ID" value="AED89575.1"/>
    <property type="molecule type" value="mRNA"/>
</dbReference>
<dbReference type="GO" id="GO:0005576">
    <property type="term" value="C:extracellular region"/>
    <property type="evidence" value="ECO:0007669"/>
    <property type="project" value="UniProtKB-SubCell"/>
</dbReference>
<dbReference type="GO" id="GO:0005179">
    <property type="term" value="F:hormone activity"/>
    <property type="evidence" value="ECO:0007669"/>
    <property type="project" value="InterPro"/>
</dbReference>
<dbReference type="GO" id="GO:0090729">
    <property type="term" value="F:toxin activity"/>
    <property type="evidence" value="ECO:0007669"/>
    <property type="project" value="UniProtKB-KW"/>
</dbReference>
<dbReference type="GO" id="GO:0008217">
    <property type="term" value="P:regulation of blood pressure"/>
    <property type="evidence" value="ECO:0007669"/>
    <property type="project" value="UniProtKB-KW"/>
</dbReference>
<dbReference type="GO" id="GO:0042311">
    <property type="term" value="P:vasodilation"/>
    <property type="evidence" value="ECO:0007669"/>
    <property type="project" value="UniProtKB-KW"/>
</dbReference>
<dbReference type="InterPro" id="IPR002406">
    <property type="entry name" value="C_natriurtcpep"/>
</dbReference>
<dbReference type="InterPro" id="IPR000663">
    <property type="entry name" value="Natr_peptide"/>
</dbReference>
<dbReference type="InterPro" id="IPR030480">
    <property type="entry name" value="Natr_peptide_CS"/>
</dbReference>
<dbReference type="Pfam" id="PF00212">
    <property type="entry name" value="ANP"/>
    <property type="match status" value="1"/>
</dbReference>
<dbReference type="PRINTS" id="PR00713">
    <property type="entry name" value="CNATPEPTIDE"/>
</dbReference>
<dbReference type="SMART" id="SM00183">
    <property type="entry name" value="NAT_PEP"/>
    <property type="match status" value="1"/>
</dbReference>
<dbReference type="PROSITE" id="PS00263">
    <property type="entry name" value="NATRIURETIC_PEPTIDE"/>
    <property type="match status" value="1"/>
</dbReference>
<feature type="signal peptide" evidence="3">
    <location>
        <begin position="1"/>
        <end position="25"/>
    </location>
</feature>
<feature type="propeptide" id="PRO_0000414911" evidence="4">
    <location>
        <begin position="26"/>
        <end position="70"/>
    </location>
</feature>
<feature type="chain" id="PRO_0000414912" description="Natriuretic peptide" evidence="1">
    <location>
        <begin position="71"/>
        <end position="109"/>
    </location>
</feature>
<feature type="propeptide" id="PRO_0000414913" evidence="4">
    <location>
        <begin position="110"/>
        <end position="120"/>
    </location>
</feature>
<feature type="disulfide bond" evidence="2">
    <location>
        <begin position="81"/>
        <end position="97"/>
    </location>
</feature>
<proteinExistence type="evidence at transcript level"/>
<keyword id="KW-1015">Disulfide bond</keyword>
<keyword id="KW-0382">Hypotensive agent</keyword>
<keyword id="KW-0964">Secreted</keyword>
<keyword id="KW-0732">Signal</keyword>
<keyword id="KW-0800">Toxin</keyword>
<keyword id="KW-0838">Vasoactive</keyword>
<keyword id="KW-0840">Vasodilator</keyword>